<gene>
    <name type="ordered locus">SACOL2256</name>
</gene>
<organism>
    <name type="scientific">Staphylococcus aureus (strain COL)</name>
    <dbReference type="NCBI Taxonomy" id="93062"/>
    <lineage>
        <taxon>Bacteria</taxon>
        <taxon>Bacillati</taxon>
        <taxon>Bacillota</taxon>
        <taxon>Bacilli</taxon>
        <taxon>Bacillales</taxon>
        <taxon>Staphylococcaceae</taxon>
        <taxon>Staphylococcus</taxon>
    </lineage>
</organism>
<feature type="chain" id="PRO_0000054412" description="Uncharacterized HTH-type transcriptional regulator SACOL2256">
    <location>
        <begin position="1"/>
        <end position="146"/>
    </location>
</feature>
<feature type="domain" description="HTH marR-type" evidence="1">
    <location>
        <begin position="1"/>
        <end position="137"/>
    </location>
</feature>
<reference key="1">
    <citation type="journal article" date="2005" name="J. Bacteriol.">
        <title>Insights on evolution of virulence and resistance from the complete genome analysis of an early methicillin-resistant Staphylococcus aureus strain and a biofilm-producing methicillin-resistant Staphylococcus epidermidis strain.</title>
        <authorList>
            <person name="Gill S.R."/>
            <person name="Fouts D.E."/>
            <person name="Archer G.L."/>
            <person name="Mongodin E.F."/>
            <person name="DeBoy R.T."/>
            <person name="Ravel J."/>
            <person name="Paulsen I.T."/>
            <person name="Kolonay J.F."/>
            <person name="Brinkac L.M."/>
            <person name="Beanan M.J."/>
            <person name="Dodson R.J."/>
            <person name="Daugherty S.C."/>
            <person name="Madupu R."/>
            <person name="Angiuoli S.V."/>
            <person name="Durkin A.S."/>
            <person name="Haft D.H."/>
            <person name="Vamathevan J.J."/>
            <person name="Khouri H."/>
            <person name="Utterback T.R."/>
            <person name="Lee C."/>
            <person name="Dimitrov G."/>
            <person name="Jiang L."/>
            <person name="Qin H."/>
            <person name="Weidman J."/>
            <person name="Tran K."/>
            <person name="Kang K.H."/>
            <person name="Hance I.R."/>
            <person name="Nelson K.E."/>
            <person name="Fraser C.M."/>
        </authorList>
    </citation>
    <scope>NUCLEOTIDE SEQUENCE [LARGE SCALE GENOMIC DNA]</scope>
    <source>
        <strain>COL</strain>
    </source>
</reference>
<dbReference type="EMBL" id="CP000046">
    <property type="protein sequence ID" value="AAW37128.1"/>
    <property type="molecule type" value="Genomic_DNA"/>
</dbReference>
<dbReference type="RefSeq" id="WP_000951058.1">
    <property type="nucleotide sequence ID" value="NZ_JBGOFO010000004.1"/>
</dbReference>
<dbReference type="SMR" id="Q5HDU4"/>
<dbReference type="KEGG" id="sac:SACOL2256"/>
<dbReference type="HOGENOM" id="CLU_083287_18_2_9"/>
<dbReference type="Proteomes" id="UP000000530">
    <property type="component" value="Chromosome"/>
</dbReference>
<dbReference type="GO" id="GO:0003677">
    <property type="term" value="F:DNA binding"/>
    <property type="evidence" value="ECO:0007669"/>
    <property type="project" value="UniProtKB-KW"/>
</dbReference>
<dbReference type="GO" id="GO:0003700">
    <property type="term" value="F:DNA-binding transcription factor activity"/>
    <property type="evidence" value="ECO:0007669"/>
    <property type="project" value="InterPro"/>
</dbReference>
<dbReference type="GO" id="GO:0006950">
    <property type="term" value="P:response to stress"/>
    <property type="evidence" value="ECO:0007669"/>
    <property type="project" value="TreeGrafter"/>
</dbReference>
<dbReference type="FunFam" id="1.10.10.10:FF:000684">
    <property type="entry name" value="Transcriptional regulator, MarR family"/>
    <property type="match status" value="1"/>
</dbReference>
<dbReference type="Gene3D" id="1.10.10.10">
    <property type="entry name" value="Winged helix-like DNA-binding domain superfamily/Winged helix DNA-binding domain"/>
    <property type="match status" value="1"/>
</dbReference>
<dbReference type="InterPro" id="IPR000835">
    <property type="entry name" value="HTH_MarR-typ"/>
</dbReference>
<dbReference type="InterPro" id="IPR039422">
    <property type="entry name" value="MarR/SlyA-like"/>
</dbReference>
<dbReference type="InterPro" id="IPR023187">
    <property type="entry name" value="Tscrpt_reg_MarR-type_CS"/>
</dbReference>
<dbReference type="InterPro" id="IPR036388">
    <property type="entry name" value="WH-like_DNA-bd_sf"/>
</dbReference>
<dbReference type="InterPro" id="IPR036390">
    <property type="entry name" value="WH_DNA-bd_sf"/>
</dbReference>
<dbReference type="PANTHER" id="PTHR33164">
    <property type="entry name" value="TRANSCRIPTIONAL REGULATOR, MARR FAMILY"/>
    <property type="match status" value="1"/>
</dbReference>
<dbReference type="PANTHER" id="PTHR33164:SF44">
    <property type="entry name" value="TRANSCRIPTIONAL REGULATORY PROTEIN"/>
    <property type="match status" value="1"/>
</dbReference>
<dbReference type="Pfam" id="PF01047">
    <property type="entry name" value="MarR"/>
    <property type="match status" value="1"/>
</dbReference>
<dbReference type="SMART" id="SM00347">
    <property type="entry name" value="HTH_MARR"/>
    <property type="match status" value="1"/>
</dbReference>
<dbReference type="SUPFAM" id="SSF46785">
    <property type="entry name" value="Winged helix' DNA-binding domain"/>
    <property type="match status" value="1"/>
</dbReference>
<dbReference type="PROSITE" id="PS01117">
    <property type="entry name" value="HTH_MARR_1"/>
    <property type="match status" value="1"/>
</dbReference>
<dbReference type="PROSITE" id="PS50995">
    <property type="entry name" value="HTH_MARR_2"/>
    <property type="match status" value="1"/>
</dbReference>
<keyword id="KW-0238">DNA-binding</keyword>
<keyword id="KW-0804">Transcription</keyword>
<keyword id="KW-0805">Transcription regulation</keyword>
<protein>
    <recommendedName>
        <fullName>Uncharacterized HTH-type transcriptional regulator SACOL2256</fullName>
    </recommendedName>
</protein>
<name>Y2256_STAAC</name>
<evidence type="ECO:0000255" key="1">
    <source>
        <dbReference type="PROSITE-ProRule" id="PRU00345"/>
    </source>
</evidence>
<accession>Q5HDU4</accession>
<proteinExistence type="predicted"/>
<sequence>MLSQEFFNSFITIYRPYLKLAEPILEKHNIYYGQWLILRDIAKHQPTTLIEISHRRAIEKPTARKTLKALIENDLITVENSLEDKRQKFLTLTPKGHELYEIVCLDVQKLQQAVVAKTNISQDQMQETINVMNQIHEILLKEAHND</sequence>